<gene>
    <name type="primary">rbcR</name>
    <name type="synonym">ycf30</name>
</gene>
<organism>
    <name type="scientific">Emiliania huxleyi</name>
    <name type="common">Coccolithophore</name>
    <name type="synonym">Pontosphaera huxleyi</name>
    <dbReference type="NCBI Taxonomy" id="2903"/>
    <lineage>
        <taxon>Eukaryota</taxon>
        <taxon>Haptista</taxon>
        <taxon>Haptophyta</taxon>
        <taxon>Prymnesiophyceae</taxon>
        <taxon>Isochrysidales</taxon>
        <taxon>Noelaerhabdaceae</taxon>
        <taxon>Emiliania</taxon>
    </lineage>
</organism>
<sequence>MSDLPFTLDQLKIIKTIHREGSFKTAAKKLYISQPAVSRQVQNLERQLNTPIFYRDKRKARLTETGHILVKYAEQILSLCEETCQALDELKSINSGTLVIGASQTTGTYLMPRLIGIFRHKYPQISIELKVHSTRRISWGVANGEIDLAIVGGEVPPELQGTLEIISYAEDELALIIPQAHPFATLQSIQKEDLYRLRFIALDTQSTIRSVIENTLTQSGIDSRYFKIEMELNSIEAIKNAVQSGLGAAFVSVSAISKELELGILHWAKIEDVTIKRTLSILINPKRYYANPIKNFEKEIMEILLTSAASTNNP</sequence>
<evidence type="ECO:0000250" key="1"/>
<evidence type="ECO:0000255" key="2">
    <source>
        <dbReference type="PROSITE-ProRule" id="PRU00253"/>
    </source>
</evidence>
<evidence type="ECO:0000305" key="3"/>
<geneLocation type="chloroplast"/>
<comment type="function">
    <text evidence="1">Trans-acting transcriptional regulator of RuBisCO genes (rbcL and rbcS) expression.</text>
</comment>
<comment type="subcellular location">
    <subcellularLocation>
        <location>Plastid</location>
        <location>Chloroplast</location>
    </subcellularLocation>
</comment>
<comment type="similarity">
    <text evidence="3">Belongs to the LysR transcriptional regulatory family.</text>
</comment>
<keyword id="KW-0150">Chloroplast</keyword>
<keyword id="KW-0238">DNA-binding</keyword>
<keyword id="KW-0934">Plastid</keyword>
<keyword id="KW-0804">Transcription</keyword>
<keyword id="KW-0805">Transcription regulation</keyword>
<feature type="chain" id="PRO_0000280075" description="Probable RuBisCO transcriptional regulator">
    <location>
        <begin position="1"/>
        <end position="314"/>
    </location>
</feature>
<feature type="domain" description="HTH lysR-type" evidence="2">
    <location>
        <begin position="6"/>
        <end position="63"/>
    </location>
</feature>
<feature type="DNA-binding region" description="H-T-H motif" evidence="2">
    <location>
        <begin position="23"/>
        <end position="42"/>
    </location>
</feature>
<name>RBCR_EMIHU</name>
<dbReference type="EMBL" id="AY741371">
    <property type="protein sequence ID" value="AAX13882.1"/>
    <property type="molecule type" value="Genomic_DNA"/>
</dbReference>
<dbReference type="RefSeq" id="YP_277383.1">
    <property type="nucleotide sequence ID" value="NC_007288.1"/>
</dbReference>
<dbReference type="SMR" id="Q4G384"/>
<dbReference type="STRING" id="2903.Q4G384"/>
<dbReference type="GeneID" id="3562466"/>
<dbReference type="GO" id="GO:0009507">
    <property type="term" value="C:chloroplast"/>
    <property type="evidence" value="ECO:0007669"/>
    <property type="project" value="UniProtKB-SubCell"/>
</dbReference>
<dbReference type="GO" id="GO:0003700">
    <property type="term" value="F:DNA-binding transcription factor activity"/>
    <property type="evidence" value="ECO:0007669"/>
    <property type="project" value="InterPro"/>
</dbReference>
<dbReference type="GO" id="GO:0000976">
    <property type="term" value="F:transcription cis-regulatory region binding"/>
    <property type="evidence" value="ECO:0007669"/>
    <property type="project" value="TreeGrafter"/>
</dbReference>
<dbReference type="CDD" id="cd08420">
    <property type="entry name" value="PBP2_CysL_like"/>
    <property type="match status" value="1"/>
</dbReference>
<dbReference type="FunFam" id="1.10.10.10:FF:000001">
    <property type="entry name" value="LysR family transcriptional regulator"/>
    <property type="match status" value="1"/>
</dbReference>
<dbReference type="Gene3D" id="3.40.190.290">
    <property type="match status" value="1"/>
</dbReference>
<dbReference type="Gene3D" id="1.10.10.10">
    <property type="entry name" value="Winged helix-like DNA-binding domain superfamily/Winged helix DNA-binding domain"/>
    <property type="match status" value="1"/>
</dbReference>
<dbReference type="InterPro" id="IPR005119">
    <property type="entry name" value="LysR_subst-bd"/>
</dbReference>
<dbReference type="InterPro" id="IPR000847">
    <property type="entry name" value="Tscrpt_reg_HTH_LysR"/>
</dbReference>
<dbReference type="InterPro" id="IPR036388">
    <property type="entry name" value="WH-like_DNA-bd_sf"/>
</dbReference>
<dbReference type="InterPro" id="IPR036390">
    <property type="entry name" value="WH_DNA-bd_sf"/>
</dbReference>
<dbReference type="PANTHER" id="PTHR30126">
    <property type="entry name" value="HTH-TYPE TRANSCRIPTIONAL REGULATOR"/>
    <property type="match status" value="1"/>
</dbReference>
<dbReference type="PANTHER" id="PTHR30126:SF39">
    <property type="entry name" value="HTH-TYPE TRANSCRIPTIONAL REGULATOR CYSL"/>
    <property type="match status" value="1"/>
</dbReference>
<dbReference type="Pfam" id="PF00126">
    <property type="entry name" value="HTH_1"/>
    <property type="match status" value="1"/>
</dbReference>
<dbReference type="Pfam" id="PF03466">
    <property type="entry name" value="LysR_substrate"/>
    <property type="match status" value="1"/>
</dbReference>
<dbReference type="PRINTS" id="PR00039">
    <property type="entry name" value="HTHLYSR"/>
</dbReference>
<dbReference type="SUPFAM" id="SSF53850">
    <property type="entry name" value="Periplasmic binding protein-like II"/>
    <property type="match status" value="1"/>
</dbReference>
<dbReference type="SUPFAM" id="SSF46785">
    <property type="entry name" value="Winged helix' DNA-binding domain"/>
    <property type="match status" value="1"/>
</dbReference>
<dbReference type="PROSITE" id="PS50931">
    <property type="entry name" value="HTH_LYSR"/>
    <property type="match status" value="1"/>
</dbReference>
<protein>
    <recommendedName>
        <fullName>Probable RuBisCO transcriptional regulator</fullName>
    </recommendedName>
</protein>
<accession>Q4G384</accession>
<reference key="1">
    <citation type="journal article" date="2005" name="DNA Res.">
        <title>The complete plastid genome sequence of the haptophyte Emiliania huxleyi: a comparison to other plastid genomes.</title>
        <authorList>
            <person name="Sanchez-Puerta M.V."/>
            <person name="Bachvaroff T.R."/>
            <person name="Delwiche C.F."/>
        </authorList>
    </citation>
    <scope>NUCLEOTIDE SEQUENCE [LARGE SCALE GENOMIC DNA]</scope>
    <source>
        <strain>CCMP373 / CSIRO-CS-57 / BT6</strain>
    </source>
</reference>
<proteinExistence type="inferred from homology"/>